<reference key="1">
    <citation type="submission" date="2003-08" db="EMBL/GenBank/DDBJ databases">
        <title>Yersinia kristensenii urease gene locus (ureABCEFGD), urea transporter gene (yut) and nickel transporter gene (ureH).</title>
        <authorList>
            <person name="Sebbane F."/>
            <person name="Lemaitre N."/>
            <person name="Simonet M."/>
        </authorList>
    </citation>
    <scope>NUCLEOTIDE SEQUENCE [GENOMIC DNA]</scope>
</reference>
<evidence type="ECO:0000255" key="1">
    <source>
        <dbReference type="HAMAP-Rule" id="MF_00739"/>
    </source>
</evidence>
<organism>
    <name type="scientific">Yersinia kristensenii</name>
    <dbReference type="NCBI Taxonomy" id="28152"/>
    <lineage>
        <taxon>Bacteria</taxon>
        <taxon>Pseudomonadati</taxon>
        <taxon>Pseudomonadota</taxon>
        <taxon>Gammaproteobacteria</taxon>
        <taxon>Enterobacterales</taxon>
        <taxon>Yersiniaceae</taxon>
        <taxon>Yersinia</taxon>
    </lineage>
</organism>
<name>URE3_YERKR</name>
<comment type="catalytic activity">
    <reaction evidence="1">
        <text>urea + 2 H2O + H(+) = hydrogencarbonate + 2 NH4(+)</text>
        <dbReference type="Rhea" id="RHEA:20557"/>
        <dbReference type="ChEBI" id="CHEBI:15377"/>
        <dbReference type="ChEBI" id="CHEBI:15378"/>
        <dbReference type="ChEBI" id="CHEBI:16199"/>
        <dbReference type="ChEBI" id="CHEBI:17544"/>
        <dbReference type="ChEBI" id="CHEBI:28938"/>
        <dbReference type="EC" id="3.5.1.5"/>
    </reaction>
</comment>
<comment type="pathway">
    <text evidence="1">Nitrogen metabolism; urea degradation; CO(2) and NH(3) from urea (urease route): step 1/1.</text>
</comment>
<comment type="subunit">
    <text evidence="1">Heterotrimer of UreA (gamma), UreB (beta) and UreC (alpha) subunits. Three heterotrimers associate to form the active enzyme.</text>
</comment>
<comment type="subcellular location">
    <subcellularLocation>
        <location evidence="1">Cytoplasm</location>
    </subcellularLocation>
</comment>
<comment type="similarity">
    <text evidence="1">Belongs to the urease gamma subunit family.</text>
</comment>
<keyword id="KW-0963">Cytoplasm</keyword>
<keyword id="KW-0378">Hydrolase</keyword>
<protein>
    <recommendedName>
        <fullName evidence="1">Urease subunit gamma</fullName>
        <ecNumber evidence="1">3.5.1.5</ecNumber>
    </recommendedName>
    <alternativeName>
        <fullName evidence="1">Urea amidohydrolase subunit gamma</fullName>
    </alternativeName>
</protein>
<feature type="chain" id="PRO_0000098064" description="Urease subunit gamma">
    <location>
        <begin position="1"/>
        <end position="100"/>
    </location>
</feature>
<dbReference type="EC" id="3.5.1.5" evidence="1"/>
<dbReference type="EMBL" id="AY363684">
    <property type="protein sequence ID" value="AAR15117.1"/>
    <property type="molecule type" value="Genomic_DNA"/>
</dbReference>
<dbReference type="RefSeq" id="WP_002215288.1">
    <property type="nucleotide sequence ID" value="NZ_UHIY01000001.1"/>
</dbReference>
<dbReference type="SMR" id="Q6UR53"/>
<dbReference type="STRING" id="28152.CH54_1557"/>
<dbReference type="eggNOG" id="COG0831">
    <property type="taxonomic scope" value="Bacteria"/>
</dbReference>
<dbReference type="OrthoDB" id="9797217at2"/>
<dbReference type="UniPathway" id="UPA00258">
    <property type="reaction ID" value="UER00370"/>
</dbReference>
<dbReference type="GO" id="GO:0005737">
    <property type="term" value="C:cytoplasm"/>
    <property type="evidence" value="ECO:0007669"/>
    <property type="project" value="UniProtKB-SubCell"/>
</dbReference>
<dbReference type="GO" id="GO:0016151">
    <property type="term" value="F:nickel cation binding"/>
    <property type="evidence" value="ECO:0007669"/>
    <property type="project" value="InterPro"/>
</dbReference>
<dbReference type="GO" id="GO:0009039">
    <property type="term" value="F:urease activity"/>
    <property type="evidence" value="ECO:0007669"/>
    <property type="project" value="UniProtKB-UniRule"/>
</dbReference>
<dbReference type="GO" id="GO:0043419">
    <property type="term" value="P:urea catabolic process"/>
    <property type="evidence" value="ECO:0007669"/>
    <property type="project" value="UniProtKB-UniRule"/>
</dbReference>
<dbReference type="CDD" id="cd00390">
    <property type="entry name" value="Urease_gamma"/>
    <property type="match status" value="1"/>
</dbReference>
<dbReference type="Gene3D" id="3.30.280.10">
    <property type="entry name" value="Urease, gamma-like subunit"/>
    <property type="match status" value="1"/>
</dbReference>
<dbReference type="HAMAP" id="MF_00739">
    <property type="entry name" value="Urease_gamma"/>
    <property type="match status" value="1"/>
</dbReference>
<dbReference type="InterPro" id="IPR012010">
    <property type="entry name" value="Urease_gamma"/>
</dbReference>
<dbReference type="InterPro" id="IPR002026">
    <property type="entry name" value="Urease_gamma/gamma-beta_su"/>
</dbReference>
<dbReference type="InterPro" id="IPR036463">
    <property type="entry name" value="Urease_gamma_sf"/>
</dbReference>
<dbReference type="InterPro" id="IPR050069">
    <property type="entry name" value="Urease_subunit"/>
</dbReference>
<dbReference type="NCBIfam" id="NF009712">
    <property type="entry name" value="PRK13241.1"/>
    <property type="match status" value="1"/>
</dbReference>
<dbReference type="NCBIfam" id="TIGR00193">
    <property type="entry name" value="urease_gam"/>
    <property type="match status" value="1"/>
</dbReference>
<dbReference type="PANTHER" id="PTHR33569">
    <property type="entry name" value="UREASE"/>
    <property type="match status" value="1"/>
</dbReference>
<dbReference type="PANTHER" id="PTHR33569:SF1">
    <property type="entry name" value="UREASE"/>
    <property type="match status" value="1"/>
</dbReference>
<dbReference type="Pfam" id="PF00547">
    <property type="entry name" value="Urease_gamma"/>
    <property type="match status" value="1"/>
</dbReference>
<dbReference type="PIRSF" id="PIRSF001223">
    <property type="entry name" value="Urease_gamma"/>
    <property type="match status" value="1"/>
</dbReference>
<dbReference type="SUPFAM" id="SSF54111">
    <property type="entry name" value="Urease, gamma-subunit"/>
    <property type="match status" value="1"/>
</dbReference>
<accession>Q6UR53</accession>
<sequence>MQLTPREVEKLMIYTLSDVAFKRKARGLKLNYPEAVSIITVTAMEGARDGKSVEDVMKEASKVLTKDDVMDGVADLIPNVQVEAIFTDGSRLVTVHDPIK</sequence>
<proteinExistence type="inferred from homology"/>
<gene>
    <name evidence="1" type="primary">ureA</name>
</gene>